<accession>Q1MM58</accession>
<comment type="function">
    <text evidence="1">Required for the insertion and/or proper folding and/or complex formation of integral membrane proteins into the membrane. Involved in integration of membrane proteins that insert both dependently and independently of the Sec translocase complex, as well as at least some lipoproteins. Aids folding of multispanning membrane proteins.</text>
</comment>
<comment type="subunit">
    <text evidence="1">Interacts with the Sec translocase complex via SecD. Specifically interacts with transmembrane segments of nascent integral membrane proteins during membrane integration.</text>
</comment>
<comment type="subcellular location">
    <subcellularLocation>
        <location evidence="1">Cell inner membrane</location>
        <topology evidence="1">Multi-pass membrane protein</topology>
    </subcellularLocation>
</comment>
<comment type="similarity">
    <text evidence="1">Belongs to the OXA1/ALB3/YidC family. Type 1 subfamily.</text>
</comment>
<evidence type="ECO:0000255" key="1">
    <source>
        <dbReference type="HAMAP-Rule" id="MF_01810"/>
    </source>
</evidence>
<evidence type="ECO:0000256" key="2">
    <source>
        <dbReference type="SAM" id="MobiDB-lite"/>
    </source>
</evidence>
<organism>
    <name type="scientific">Rhizobium johnstonii (strain DSM 114642 / LMG 32736 / 3841)</name>
    <name type="common">Rhizobium leguminosarum bv. viciae</name>
    <dbReference type="NCBI Taxonomy" id="216596"/>
    <lineage>
        <taxon>Bacteria</taxon>
        <taxon>Pseudomonadati</taxon>
        <taxon>Pseudomonadota</taxon>
        <taxon>Alphaproteobacteria</taxon>
        <taxon>Hyphomicrobiales</taxon>
        <taxon>Rhizobiaceae</taxon>
        <taxon>Rhizobium/Agrobacterium group</taxon>
        <taxon>Rhizobium</taxon>
        <taxon>Rhizobium johnstonii</taxon>
    </lineage>
</organism>
<protein>
    <recommendedName>
        <fullName evidence="1">Membrane protein insertase YidC</fullName>
    </recommendedName>
    <alternativeName>
        <fullName evidence="1">Foldase YidC</fullName>
    </alternativeName>
    <alternativeName>
        <fullName evidence="1">Membrane integrase YidC</fullName>
    </alternativeName>
    <alternativeName>
        <fullName evidence="1">Membrane protein YidC</fullName>
    </alternativeName>
</protein>
<dbReference type="EMBL" id="AM236080">
    <property type="protein sequence ID" value="CAK05944.1"/>
    <property type="molecule type" value="Genomic_DNA"/>
</dbReference>
<dbReference type="SMR" id="Q1MM58"/>
<dbReference type="EnsemblBacteria" id="CAK05944">
    <property type="protein sequence ID" value="CAK05944"/>
    <property type="gene ID" value="RL0453"/>
</dbReference>
<dbReference type="KEGG" id="rle:RL0453"/>
<dbReference type="eggNOG" id="COG0706">
    <property type="taxonomic scope" value="Bacteria"/>
</dbReference>
<dbReference type="HOGENOM" id="CLU_016535_1_0_5"/>
<dbReference type="Proteomes" id="UP000006575">
    <property type="component" value="Chromosome"/>
</dbReference>
<dbReference type="GO" id="GO:0005886">
    <property type="term" value="C:plasma membrane"/>
    <property type="evidence" value="ECO:0007669"/>
    <property type="project" value="UniProtKB-SubCell"/>
</dbReference>
<dbReference type="GO" id="GO:0032977">
    <property type="term" value="F:membrane insertase activity"/>
    <property type="evidence" value="ECO:0007669"/>
    <property type="project" value="InterPro"/>
</dbReference>
<dbReference type="GO" id="GO:0051205">
    <property type="term" value="P:protein insertion into membrane"/>
    <property type="evidence" value="ECO:0007669"/>
    <property type="project" value="TreeGrafter"/>
</dbReference>
<dbReference type="GO" id="GO:0015031">
    <property type="term" value="P:protein transport"/>
    <property type="evidence" value="ECO:0007669"/>
    <property type="project" value="UniProtKB-KW"/>
</dbReference>
<dbReference type="CDD" id="cd20070">
    <property type="entry name" value="5TM_YidC_Alb3"/>
    <property type="match status" value="1"/>
</dbReference>
<dbReference type="CDD" id="cd19961">
    <property type="entry name" value="EcYidC-like_peri"/>
    <property type="match status" value="1"/>
</dbReference>
<dbReference type="Gene3D" id="2.70.98.90">
    <property type="match status" value="1"/>
</dbReference>
<dbReference type="HAMAP" id="MF_01810">
    <property type="entry name" value="YidC_type1"/>
    <property type="match status" value="1"/>
</dbReference>
<dbReference type="InterPro" id="IPR019998">
    <property type="entry name" value="Membr_insert_YidC"/>
</dbReference>
<dbReference type="InterPro" id="IPR028053">
    <property type="entry name" value="Membr_insert_YidC_N"/>
</dbReference>
<dbReference type="InterPro" id="IPR001708">
    <property type="entry name" value="YidC/ALB3/OXA1/COX18"/>
</dbReference>
<dbReference type="InterPro" id="IPR028055">
    <property type="entry name" value="YidC/Oxa/ALB_C"/>
</dbReference>
<dbReference type="InterPro" id="IPR047196">
    <property type="entry name" value="YidC_ALB_C"/>
</dbReference>
<dbReference type="InterPro" id="IPR038221">
    <property type="entry name" value="YidC_periplasmic_sf"/>
</dbReference>
<dbReference type="NCBIfam" id="NF002353">
    <property type="entry name" value="PRK01318.1-4"/>
    <property type="match status" value="1"/>
</dbReference>
<dbReference type="NCBIfam" id="TIGR03593">
    <property type="entry name" value="yidC_nterm"/>
    <property type="match status" value="1"/>
</dbReference>
<dbReference type="NCBIfam" id="TIGR03592">
    <property type="entry name" value="yidC_oxa1_cterm"/>
    <property type="match status" value="1"/>
</dbReference>
<dbReference type="PANTHER" id="PTHR12428:SF65">
    <property type="entry name" value="CYTOCHROME C OXIDASE ASSEMBLY PROTEIN COX18, MITOCHONDRIAL"/>
    <property type="match status" value="1"/>
</dbReference>
<dbReference type="PANTHER" id="PTHR12428">
    <property type="entry name" value="OXA1"/>
    <property type="match status" value="1"/>
</dbReference>
<dbReference type="Pfam" id="PF02096">
    <property type="entry name" value="60KD_IMP"/>
    <property type="match status" value="1"/>
</dbReference>
<dbReference type="Pfam" id="PF14849">
    <property type="entry name" value="YidC_periplas"/>
    <property type="match status" value="1"/>
</dbReference>
<dbReference type="PRINTS" id="PR00701">
    <property type="entry name" value="60KDINNERMP"/>
</dbReference>
<dbReference type="PRINTS" id="PR01900">
    <property type="entry name" value="YIDCPROTEIN"/>
</dbReference>
<proteinExistence type="inferred from homology"/>
<gene>
    <name evidence="1" type="primary">yidC</name>
    <name type="ordered locus">RL0453</name>
</gene>
<feature type="chain" id="PRO_1000070151" description="Membrane protein insertase YidC">
    <location>
        <begin position="1"/>
        <end position="598"/>
    </location>
</feature>
<feature type="transmembrane region" description="Helical" evidence="1">
    <location>
        <begin position="7"/>
        <end position="27"/>
    </location>
</feature>
<feature type="transmembrane region" description="Helical" evidence="1">
    <location>
        <begin position="377"/>
        <end position="397"/>
    </location>
</feature>
<feature type="transmembrane region" description="Helical" evidence="1">
    <location>
        <begin position="447"/>
        <end position="467"/>
    </location>
</feature>
<feature type="transmembrane region" description="Helical" evidence="1">
    <location>
        <begin position="492"/>
        <end position="512"/>
    </location>
</feature>
<feature type="transmembrane region" description="Helical" evidence="1">
    <location>
        <begin position="538"/>
        <end position="558"/>
    </location>
</feature>
<feature type="region of interest" description="Disordered" evidence="2">
    <location>
        <begin position="37"/>
        <end position="76"/>
    </location>
</feature>
<feature type="compositionally biased region" description="Low complexity" evidence="2">
    <location>
        <begin position="40"/>
        <end position="76"/>
    </location>
</feature>
<reference key="1">
    <citation type="journal article" date="2006" name="Genome Biol.">
        <title>The genome of Rhizobium leguminosarum has recognizable core and accessory components.</title>
        <authorList>
            <person name="Young J.P.W."/>
            <person name="Crossman L.C."/>
            <person name="Johnston A.W.B."/>
            <person name="Thomson N.R."/>
            <person name="Ghazoui Z.F."/>
            <person name="Hull K.H."/>
            <person name="Wexler M."/>
            <person name="Curson A.R.J."/>
            <person name="Todd J.D."/>
            <person name="Poole P.S."/>
            <person name="Mauchline T.H."/>
            <person name="East A.K."/>
            <person name="Quail M.A."/>
            <person name="Churcher C."/>
            <person name="Arrowsmith C."/>
            <person name="Cherevach I."/>
            <person name="Chillingworth T."/>
            <person name="Clarke K."/>
            <person name="Cronin A."/>
            <person name="Davis P."/>
            <person name="Fraser A."/>
            <person name="Hance Z."/>
            <person name="Hauser H."/>
            <person name="Jagels K."/>
            <person name="Moule S."/>
            <person name="Mungall K."/>
            <person name="Norbertczak H."/>
            <person name="Rabbinowitsch E."/>
            <person name="Sanders M."/>
            <person name="Simmonds M."/>
            <person name="Whitehead S."/>
            <person name="Parkhill J."/>
        </authorList>
    </citation>
    <scope>NUCLEOTIDE SEQUENCE [LARGE SCALE GENOMIC DNA]</scope>
    <source>
        <strain>DSM 114642 / LMG 32736 / 3841</strain>
    </source>
</reference>
<sequence>MMENNRNYFIAIALSVLIVLGWQFLYMNPRIEAQRKAQEAQKAQQQTEQVQQPAAGGQTPAQTSGAAPSGQAAATATLEQALQKSPRVVIDTPALSGSINLAGARLDDLKLKGYHETVDDSSPIITLFSPAETKDGYFTELGYIGSDATGSVPGPSTLWTAPEGAKLTEKTPVTLSYTNDKGLTFTRTISVDERYMFTVADKIENTGQAPAALSSYGRVTRYNKPTTPSVYVLHEGFIGVIGDDGLIETKYSAVEKEAVAPAKSTGGWLGITDKYWAATIVPPQSAAYEAHFSYFADGQPRYQADYKDDAFTVAPGQSIELKNLVFAGAKEVPVIDGYEASYSIPKFDRLIDWGWFYFITKPMFKLMDFFFRYFGNFGVAILCTTIVVKALFFPLASKQYASMANMKRMQPKMEELKAKFADDRMGLQQATMQLYKEEKINPIAGCWPVALQIPIFFSLYKVIYITIEMRHAPFFGWIKDLSAPDPTTIVNLFGLLPFEGPTLLHLGVWPLIMGVTMFVQMRMNPTPPDPTQAMIFNWMPLVFMFMLASFPAGLVIYWAWNNTLSVAQQGLIMKRHGVKVELFDNLKGLFRRKEAPSK</sequence>
<keyword id="KW-0997">Cell inner membrane</keyword>
<keyword id="KW-1003">Cell membrane</keyword>
<keyword id="KW-0143">Chaperone</keyword>
<keyword id="KW-0472">Membrane</keyword>
<keyword id="KW-0653">Protein transport</keyword>
<keyword id="KW-0812">Transmembrane</keyword>
<keyword id="KW-1133">Transmembrane helix</keyword>
<keyword id="KW-0813">Transport</keyword>
<name>YIDC_RHIJ3</name>